<gene>
    <name evidence="1" type="primary">rps19</name>
</gene>
<accession>B3TN90</accession>
<keyword id="KW-0150">Chloroplast</keyword>
<keyword id="KW-0934">Plastid</keyword>
<keyword id="KW-1185">Reference proteome</keyword>
<keyword id="KW-0687">Ribonucleoprotein</keyword>
<keyword id="KW-0689">Ribosomal protein</keyword>
<keyword id="KW-0694">RNA-binding</keyword>
<keyword id="KW-0699">rRNA-binding</keyword>
<name>RR19_BRADI</name>
<proteinExistence type="inferred from homology"/>
<dbReference type="EMBL" id="EU325680">
    <property type="protein sequence ID" value="ACF08678.1"/>
    <property type="molecule type" value="Genomic_DNA"/>
</dbReference>
<dbReference type="EMBL" id="EU325680">
    <property type="protein sequence ID" value="ACF08699.1"/>
    <property type="molecule type" value="Genomic_DNA"/>
</dbReference>
<dbReference type="RefSeq" id="YP_002000526.1">
    <property type="nucleotide sequence ID" value="NC_011032.1"/>
</dbReference>
<dbReference type="RefSeq" id="YP_002000547.1">
    <property type="nucleotide sequence ID" value="NC_011032.1"/>
</dbReference>
<dbReference type="SMR" id="B3TN90"/>
<dbReference type="FunCoup" id="B3TN90">
    <property type="interactions" value="26"/>
</dbReference>
<dbReference type="STRING" id="15368.B3TN90"/>
<dbReference type="GeneID" id="6439818"/>
<dbReference type="GeneID" id="6439881"/>
<dbReference type="KEGG" id="bdi:6439818"/>
<dbReference type="KEGG" id="bdi:6439881"/>
<dbReference type="eggNOG" id="KOG0899">
    <property type="taxonomic scope" value="Eukaryota"/>
</dbReference>
<dbReference type="InParanoid" id="B3TN90"/>
<dbReference type="Proteomes" id="UP000008810">
    <property type="component" value="Chloroplast"/>
</dbReference>
<dbReference type="GO" id="GO:0009507">
    <property type="term" value="C:chloroplast"/>
    <property type="evidence" value="ECO:0007669"/>
    <property type="project" value="UniProtKB-SubCell"/>
</dbReference>
<dbReference type="GO" id="GO:0005763">
    <property type="term" value="C:mitochondrial small ribosomal subunit"/>
    <property type="evidence" value="ECO:0000318"/>
    <property type="project" value="GO_Central"/>
</dbReference>
<dbReference type="GO" id="GO:0019843">
    <property type="term" value="F:rRNA binding"/>
    <property type="evidence" value="ECO:0007669"/>
    <property type="project" value="UniProtKB-UniRule"/>
</dbReference>
<dbReference type="GO" id="GO:0003735">
    <property type="term" value="F:structural constituent of ribosome"/>
    <property type="evidence" value="ECO:0000318"/>
    <property type="project" value="GO_Central"/>
</dbReference>
<dbReference type="GO" id="GO:0000028">
    <property type="term" value="P:ribosomal small subunit assembly"/>
    <property type="evidence" value="ECO:0000318"/>
    <property type="project" value="GO_Central"/>
</dbReference>
<dbReference type="GO" id="GO:0006412">
    <property type="term" value="P:translation"/>
    <property type="evidence" value="ECO:0007669"/>
    <property type="project" value="UniProtKB-UniRule"/>
</dbReference>
<dbReference type="FunFam" id="3.30.860.10:FF:000001">
    <property type="entry name" value="30S ribosomal protein S19"/>
    <property type="match status" value="1"/>
</dbReference>
<dbReference type="Gene3D" id="3.30.860.10">
    <property type="entry name" value="30s Ribosomal Protein S19, Chain A"/>
    <property type="match status" value="1"/>
</dbReference>
<dbReference type="HAMAP" id="MF_00531">
    <property type="entry name" value="Ribosomal_uS19"/>
    <property type="match status" value="1"/>
</dbReference>
<dbReference type="InterPro" id="IPR002222">
    <property type="entry name" value="Ribosomal_uS19"/>
</dbReference>
<dbReference type="InterPro" id="IPR005732">
    <property type="entry name" value="Ribosomal_uS19_bac-type"/>
</dbReference>
<dbReference type="InterPro" id="IPR020934">
    <property type="entry name" value="Ribosomal_uS19_CS"/>
</dbReference>
<dbReference type="InterPro" id="IPR023575">
    <property type="entry name" value="Ribosomal_uS19_SF"/>
</dbReference>
<dbReference type="NCBIfam" id="TIGR01050">
    <property type="entry name" value="rpsS_bact"/>
    <property type="match status" value="1"/>
</dbReference>
<dbReference type="PANTHER" id="PTHR11880">
    <property type="entry name" value="RIBOSOMAL PROTEIN S19P FAMILY MEMBER"/>
    <property type="match status" value="1"/>
</dbReference>
<dbReference type="PANTHER" id="PTHR11880:SF8">
    <property type="entry name" value="SMALL RIBOSOMAL SUBUNIT PROTEIN US19M"/>
    <property type="match status" value="1"/>
</dbReference>
<dbReference type="Pfam" id="PF00203">
    <property type="entry name" value="Ribosomal_S19"/>
    <property type="match status" value="1"/>
</dbReference>
<dbReference type="PIRSF" id="PIRSF002144">
    <property type="entry name" value="Ribosomal_S19"/>
    <property type="match status" value="1"/>
</dbReference>
<dbReference type="PRINTS" id="PR00975">
    <property type="entry name" value="RIBOSOMALS19"/>
</dbReference>
<dbReference type="SUPFAM" id="SSF54570">
    <property type="entry name" value="Ribosomal protein S19"/>
    <property type="match status" value="1"/>
</dbReference>
<dbReference type="PROSITE" id="PS00323">
    <property type="entry name" value="RIBOSOMAL_S19"/>
    <property type="match status" value="1"/>
</dbReference>
<evidence type="ECO:0000255" key="1">
    <source>
        <dbReference type="HAMAP-Rule" id="MF_00531"/>
    </source>
</evidence>
<evidence type="ECO:0000305" key="2"/>
<protein>
    <recommendedName>
        <fullName evidence="1">Small ribosomal subunit protein uS19c</fullName>
    </recommendedName>
    <alternativeName>
        <fullName evidence="2">30S ribosomal protein S19, chloroplastic</fullName>
    </alternativeName>
</protein>
<sequence>MTRKKTNPFVAHHLLAKIEKVNMKEEKETIVTWSRASSILPTMVGHTIAIHNGKEHIPIYITNPMVGRKLGEFVPTRHFTSYENARKDTKSRR</sequence>
<reference key="1">
    <citation type="journal article" date="2008" name="BMC Res. Notes">
        <title>The complete chloroplast genome sequence of Brachypodium distachyon: sequence comparison and phylogenetic analysis of eight grass plastomes.</title>
        <authorList>
            <person name="Bortiri E."/>
            <person name="Coleman-Derr D."/>
            <person name="Lazo G.R."/>
            <person name="Anderson O.D."/>
            <person name="Gu Y.Q."/>
        </authorList>
    </citation>
    <scope>NUCLEOTIDE SEQUENCE [LARGE SCALE GENOMIC DNA]</scope>
    <source>
        <strain>cv. Bd21</strain>
    </source>
</reference>
<organism>
    <name type="scientific">Brachypodium distachyon</name>
    <name type="common">Purple false brome</name>
    <name type="synonym">Trachynia distachya</name>
    <dbReference type="NCBI Taxonomy" id="15368"/>
    <lineage>
        <taxon>Eukaryota</taxon>
        <taxon>Viridiplantae</taxon>
        <taxon>Streptophyta</taxon>
        <taxon>Embryophyta</taxon>
        <taxon>Tracheophyta</taxon>
        <taxon>Spermatophyta</taxon>
        <taxon>Magnoliopsida</taxon>
        <taxon>Liliopsida</taxon>
        <taxon>Poales</taxon>
        <taxon>Poaceae</taxon>
        <taxon>BOP clade</taxon>
        <taxon>Pooideae</taxon>
        <taxon>Stipodae</taxon>
        <taxon>Brachypodieae</taxon>
        <taxon>Brachypodium</taxon>
    </lineage>
</organism>
<geneLocation type="chloroplast"/>
<feature type="chain" id="PRO_0000354336" description="Small ribosomal subunit protein uS19c">
    <location>
        <begin position="1"/>
        <end position="93"/>
    </location>
</feature>
<comment type="function">
    <text evidence="1">Protein S19 forms a complex with S13 that binds strongly to the 16S ribosomal RNA.</text>
</comment>
<comment type="subcellular location">
    <subcellularLocation>
        <location>Plastid</location>
        <location>Chloroplast</location>
    </subcellularLocation>
</comment>
<comment type="similarity">
    <text evidence="1">Belongs to the universal ribosomal protein uS19 family.</text>
</comment>